<gene>
    <name evidence="1" type="primary">hemH</name>
    <name type="ordered locus">SynWH7803_0644</name>
</gene>
<feature type="chain" id="PRO_1000019378" description="Ferrochelatase">
    <location>
        <begin position="1"/>
        <end position="391"/>
    </location>
</feature>
<feature type="binding site" evidence="1">
    <location>
        <position position="196"/>
    </location>
    <ligand>
        <name>Fe cation</name>
        <dbReference type="ChEBI" id="CHEBI:24875"/>
    </ligand>
</feature>
<feature type="binding site" evidence="1">
    <location>
        <position position="281"/>
    </location>
    <ligand>
        <name>Fe cation</name>
        <dbReference type="ChEBI" id="CHEBI:24875"/>
    </ligand>
</feature>
<dbReference type="EC" id="4.98.1.1" evidence="1"/>
<dbReference type="EMBL" id="CT971583">
    <property type="protein sequence ID" value="CAK23070.1"/>
    <property type="molecule type" value="Genomic_DNA"/>
</dbReference>
<dbReference type="SMR" id="A5GJF5"/>
<dbReference type="STRING" id="32051.SynWH7803_0644"/>
<dbReference type="KEGG" id="syx:SynWH7803_0644"/>
<dbReference type="eggNOG" id="COG0276">
    <property type="taxonomic scope" value="Bacteria"/>
</dbReference>
<dbReference type="HOGENOM" id="CLU_018884_4_3_3"/>
<dbReference type="OrthoDB" id="9809741at2"/>
<dbReference type="UniPathway" id="UPA00252">
    <property type="reaction ID" value="UER00325"/>
</dbReference>
<dbReference type="Proteomes" id="UP000001566">
    <property type="component" value="Chromosome"/>
</dbReference>
<dbReference type="GO" id="GO:0005737">
    <property type="term" value="C:cytoplasm"/>
    <property type="evidence" value="ECO:0007669"/>
    <property type="project" value="UniProtKB-SubCell"/>
</dbReference>
<dbReference type="GO" id="GO:0004325">
    <property type="term" value="F:ferrochelatase activity"/>
    <property type="evidence" value="ECO:0007669"/>
    <property type="project" value="UniProtKB-UniRule"/>
</dbReference>
<dbReference type="GO" id="GO:0046872">
    <property type="term" value="F:metal ion binding"/>
    <property type="evidence" value="ECO:0007669"/>
    <property type="project" value="UniProtKB-KW"/>
</dbReference>
<dbReference type="GO" id="GO:0006783">
    <property type="term" value="P:heme biosynthetic process"/>
    <property type="evidence" value="ECO:0007669"/>
    <property type="project" value="UniProtKB-UniRule"/>
</dbReference>
<dbReference type="CDD" id="cd00419">
    <property type="entry name" value="Ferrochelatase_C"/>
    <property type="match status" value="1"/>
</dbReference>
<dbReference type="CDD" id="cd03411">
    <property type="entry name" value="Ferrochelatase_N"/>
    <property type="match status" value="1"/>
</dbReference>
<dbReference type="FunFam" id="3.40.50.1400:FF:000006">
    <property type="entry name" value="Ferrochelatase"/>
    <property type="match status" value="1"/>
</dbReference>
<dbReference type="Gene3D" id="3.40.50.1400">
    <property type="match status" value="2"/>
</dbReference>
<dbReference type="HAMAP" id="MF_00323">
    <property type="entry name" value="Ferrochelatase"/>
    <property type="match status" value="1"/>
</dbReference>
<dbReference type="InterPro" id="IPR001015">
    <property type="entry name" value="Ferrochelatase"/>
</dbReference>
<dbReference type="InterPro" id="IPR019772">
    <property type="entry name" value="Ferrochelatase_AS"/>
</dbReference>
<dbReference type="InterPro" id="IPR033644">
    <property type="entry name" value="Ferrochelatase_C"/>
</dbReference>
<dbReference type="InterPro" id="IPR033659">
    <property type="entry name" value="Ferrochelatase_N"/>
</dbReference>
<dbReference type="NCBIfam" id="TIGR00109">
    <property type="entry name" value="hemH"/>
    <property type="match status" value="1"/>
</dbReference>
<dbReference type="PANTHER" id="PTHR11108">
    <property type="entry name" value="FERROCHELATASE"/>
    <property type="match status" value="1"/>
</dbReference>
<dbReference type="PANTHER" id="PTHR11108:SF1">
    <property type="entry name" value="FERROCHELATASE, MITOCHONDRIAL"/>
    <property type="match status" value="1"/>
</dbReference>
<dbReference type="Pfam" id="PF00762">
    <property type="entry name" value="Ferrochelatase"/>
    <property type="match status" value="1"/>
</dbReference>
<dbReference type="SUPFAM" id="SSF53800">
    <property type="entry name" value="Chelatase"/>
    <property type="match status" value="1"/>
</dbReference>
<dbReference type="SUPFAM" id="SSF103511">
    <property type="entry name" value="Chlorophyll a-b binding protein"/>
    <property type="match status" value="1"/>
</dbReference>
<dbReference type="PROSITE" id="PS00534">
    <property type="entry name" value="FERROCHELATASE"/>
    <property type="match status" value="1"/>
</dbReference>
<organism>
    <name type="scientific">Synechococcus sp. (strain WH7803)</name>
    <dbReference type="NCBI Taxonomy" id="32051"/>
    <lineage>
        <taxon>Bacteria</taxon>
        <taxon>Bacillati</taxon>
        <taxon>Cyanobacteriota</taxon>
        <taxon>Cyanophyceae</taxon>
        <taxon>Synechococcales</taxon>
        <taxon>Synechococcaceae</taxon>
        <taxon>Synechococcus</taxon>
    </lineage>
</organism>
<accession>A5GJF5</accession>
<reference key="1">
    <citation type="submission" date="2006-05" db="EMBL/GenBank/DDBJ databases">
        <authorList>
            <consortium name="Genoscope"/>
        </authorList>
    </citation>
    <scope>NUCLEOTIDE SEQUENCE [LARGE SCALE GENOMIC DNA]</scope>
    <source>
        <strain>WH7803</strain>
    </source>
</reference>
<proteinExistence type="inferred from homology"/>
<sequence length="391" mass="43880">MSRVGVVLLNLGGPERIQDVGPFLFNLFADPEIIRLPIPALQKPLAWLISTLRSGKSQEAYRSIGGGSPLRRITEQQARELQSLLRQRGIDATSYVAMRYWHPFTESAVADLKADGMDQVVVLPLYPHFSISTSGSSFRELQRLRQGDESFEKLPIRCIRSWFDHPGYVRAMAELIAEEVRQSDDPTQAHVFFSAHGVPKSYVEEAGDPYQKEIESCTDLIMKELGQLMGHDNPFTLAYQSRVGPVEWLKPYTEEALEELGKAKTNDLVVVPISFVSEHIETLEEIDIEYRELATEAGVVNFRRVRALDTYPPFIEGLADLVTTSLEGPEVSLDAAAELPTKVKLYPQEKWEWGWNNSSEVWNGRLAMLGFSGFLLELISGHGPLHALGLL</sequence>
<name>HEMH_SYNPW</name>
<evidence type="ECO:0000255" key="1">
    <source>
        <dbReference type="HAMAP-Rule" id="MF_00323"/>
    </source>
</evidence>
<comment type="function">
    <text evidence="1">Catalyzes the ferrous insertion into protoporphyrin IX.</text>
</comment>
<comment type="catalytic activity">
    <reaction evidence="1">
        <text>heme b + 2 H(+) = protoporphyrin IX + Fe(2+)</text>
        <dbReference type="Rhea" id="RHEA:22584"/>
        <dbReference type="ChEBI" id="CHEBI:15378"/>
        <dbReference type="ChEBI" id="CHEBI:29033"/>
        <dbReference type="ChEBI" id="CHEBI:57306"/>
        <dbReference type="ChEBI" id="CHEBI:60344"/>
        <dbReference type="EC" id="4.98.1.1"/>
    </reaction>
</comment>
<comment type="pathway">
    <text evidence="1">Porphyrin-containing compound metabolism; protoheme biosynthesis; protoheme from protoporphyrin-IX: step 1/1.</text>
</comment>
<comment type="subcellular location">
    <subcellularLocation>
        <location evidence="1">Cytoplasm</location>
    </subcellularLocation>
</comment>
<comment type="similarity">
    <text evidence="1">Belongs to the ferrochelatase family.</text>
</comment>
<protein>
    <recommendedName>
        <fullName evidence="1">Ferrochelatase</fullName>
        <ecNumber evidence="1">4.98.1.1</ecNumber>
    </recommendedName>
    <alternativeName>
        <fullName evidence="1">Heme synthase</fullName>
    </alternativeName>
    <alternativeName>
        <fullName evidence="1">Protoheme ferro-lyase</fullName>
    </alternativeName>
</protein>
<keyword id="KW-0963">Cytoplasm</keyword>
<keyword id="KW-0350">Heme biosynthesis</keyword>
<keyword id="KW-0408">Iron</keyword>
<keyword id="KW-0456">Lyase</keyword>
<keyword id="KW-0479">Metal-binding</keyword>
<keyword id="KW-0627">Porphyrin biosynthesis</keyword>
<keyword id="KW-1185">Reference proteome</keyword>